<protein>
    <recommendedName>
        <fullName>ATP-dependent RNA helicase DDX24</fullName>
        <ecNumber>3.6.4.13</ecNumber>
    </recommendedName>
    <alternativeName>
        <fullName>DEAD box protein 24</fullName>
    </alternativeName>
</protein>
<keyword id="KW-0067">ATP-binding</keyword>
<keyword id="KW-0963">Cytoplasm</keyword>
<keyword id="KW-0347">Helicase</keyword>
<keyword id="KW-0378">Hydrolase</keyword>
<keyword id="KW-1017">Isopeptide bond</keyword>
<keyword id="KW-0547">Nucleotide-binding</keyword>
<keyword id="KW-0539">Nucleus</keyword>
<keyword id="KW-0597">Phosphoprotein</keyword>
<keyword id="KW-1185">Reference proteome</keyword>
<keyword id="KW-0694">RNA-binding</keyword>
<keyword id="KW-0832">Ubl conjugation</keyword>
<feature type="chain" id="PRO_0000055030" description="ATP-dependent RNA helicase DDX24">
    <location>
        <begin position="1"/>
        <end position="857"/>
    </location>
</feature>
<feature type="domain" description="Helicase ATP-binding" evidence="2">
    <location>
        <begin position="225"/>
        <end position="528"/>
    </location>
</feature>
<feature type="domain" description="Helicase C-terminal" evidence="3">
    <location>
        <begin position="576"/>
        <end position="723"/>
    </location>
</feature>
<feature type="region of interest" description="Disordered" evidence="4">
    <location>
        <begin position="61"/>
        <end position="179"/>
    </location>
</feature>
<feature type="region of interest" description="Disordered" evidence="4">
    <location>
        <begin position="279"/>
        <end position="363"/>
    </location>
</feature>
<feature type="region of interest" description="Disordered" evidence="4">
    <location>
        <begin position="808"/>
        <end position="857"/>
    </location>
</feature>
<feature type="short sequence motif" description="Q motif">
    <location>
        <begin position="193"/>
        <end position="221"/>
    </location>
</feature>
<feature type="short sequence motif" description="DEAD box">
    <location>
        <begin position="471"/>
        <end position="474"/>
    </location>
</feature>
<feature type="compositionally biased region" description="Basic residues" evidence="4">
    <location>
        <begin position="152"/>
        <end position="161"/>
    </location>
</feature>
<feature type="compositionally biased region" description="Basic and acidic residues" evidence="4">
    <location>
        <begin position="290"/>
        <end position="307"/>
    </location>
</feature>
<feature type="compositionally biased region" description="Polar residues" evidence="4">
    <location>
        <begin position="309"/>
        <end position="330"/>
    </location>
</feature>
<feature type="compositionally biased region" description="Basic and acidic residues" evidence="4">
    <location>
        <begin position="345"/>
        <end position="363"/>
    </location>
</feature>
<feature type="compositionally biased region" description="Polar residues" evidence="4">
    <location>
        <begin position="825"/>
        <end position="834"/>
    </location>
</feature>
<feature type="compositionally biased region" description="Basic residues" evidence="4">
    <location>
        <begin position="835"/>
        <end position="844"/>
    </location>
</feature>
<feature type="compositionally biased region" description="Pro residues" evidence="4">
    <location>
        <begin position="848"/>
        <end position="857"/>
    </location>
</feature>
<feature type="binding site" evidence="2">
    <location>
        <begin position="238"/>
        <end position="245"/>
    </location>
    <ligand>
        <name>ATP</name>
        <dbReference type="ChEBI" id="CHEBI:30616"/>
    </ligand>
</feature>
<feature type="modified residue" description="Phosphoserine" evidence="7 8 9">
    <location>
        <position position="80"/>
    </location>
</feature>
<feature type="modified residue" description="Phosphoserine" evidence="9">
    <location>
        <position position="92"/>
    </location>
</feature>
<feature type="modified residue" description="Phosphoserine" evidence="9">
    <location>
        <position position="170"/>
    </location>
</feature>
<feature type="modified residue" description="Phosphoserine" evidence="1">
    <location>
        <position position="288"/>
    </location>
</feature>
<feature type="modified residue" description="Phosphoserine" evidence="1">
    <location>
        <position position="296"/>
    </location>
</feature>
<feature type="cross-link" description="Glycyl lysine isopeptide (Lys-Gly) (interchain with G-Cter in SUMO2)" evidence="1">
    <location>
        <position position="370"/>
    </location>
</feature>
<feature type="cross-link" description="Glycyl lysine isopeptide (Lys-Gly) (interchain with G-Cter in SUMO2)" evidence="1">
    <location>
        <position position="624"/>
    </location>
</feature>
<feature type="sequence conflict" description="In Ref. 1; AAG02170 and 4; AAB01091." evidence="6" ref="1 4">
    <original>NE</original>
    <variation>ER</variation>
    <location>
        <begin position="556"/>
        <end position="557"/>
    </location>
</feature>
<feature type="sequence conflict" description="In Ref. 4; AAB01091." evidence="6" ref="4">
    <original>T</original>
    <variation>N</variation>
    <location>
        <position position="616"/>
    </location>
</feature>
<feature type="sequence conflict" description="In Ref. 4; AAB01091." evidence="6" ref="4">
    <original>E</original>
    <variation>EDIPLFPVHFKKIYKTLQKDE</variation>
    <location>
        <position position="710"/>
    </location>
</feature>
<reference key="1">
    <citation type="journal article" date="2000" name="Genomics">
        <title>Cloning and characterization of human DDX24 and mouse Ddx24, two novel putative DEAD-box proteins, and mapping DDX24 to human chromosome 14q32.</title>
        <authorList>
            <person name="Zhao Y."/>
            <person name="Yu L."/>
            <person name="Fu Q."/>
            <person name="Chen W."/>
            <person name="Jiang J."/>
            <person name="Gao J."/>
            <person name="Zhao S."/>
        </authorList>
    </citation>
    <scope>NUCLEOTIDE SEQUENCE [MRNA]</scope>
</reference>
<reference key="2">
    <citation type="submission" date="2005-09" db="EMBL/GenBank/DDBJ databases">
        <authorList>
            <person name="Mural R.J."/>
            <person name="Adams M.D."/>
            <person name="Myers E.W."/>
            <person name="Smith H.O."/>
            <person name="Venter J.C."/>
        </authorList>
    </citation>
    <scope>NUCLEOTIDE SEQUENCE [LARGE SCALE GENOMIC DNA]</scope>
</reference>
<reference key="3">
    <citation type="journal article" date="2004" name="Genome Res.">
        <title>The status, quality, and expansion of the NIH full-length cDNA project: the Mammalian Gene Collection (MGC).</title>
        <authorList>
            <consortium name="The MGC Project Team"/>
        </authorList>
    </citation>
    <scope>NUCLEOTIDE SEQUENCE [LARGE SCALE MRNA]</scope>
    <source>
        <strain>C57BL/6J</strain>
        <strain>FVB/N-3</strain>
        <tissue>Mammary tumor</tissue>
    </source>
</reference>
<reference key="4">
    <citation type="submission" date="1996-01" db="EMBL/GenBank/DDBJ databases">
        <title>Identification of a lipopolysaccharide inducible gene in murine macrophages that putatively encodes an ATP-dependent RNA helicase.</title>
        <authorList>
            <person name="Drysdale B."/>
            <person name="Howard D.L."/>
            <person name="Johnson R.J."/>
        </authorList>
    </citation>
    <scope>NUCLEOTIDE SEQUENCE [MRNA] OF 399-857</scope>
    <source>
        <strain>BALB/cJ</strain>
    </source>
</reference>
<reference key="5">
    <citation type="journal article" date="2007" name="Proc. Natl. Acad. Sci. U.S.A.">
        <title>Large-scale phosphorylation analysis of mouse liver.</title>
        <authorList>
            <person name="Villen J."/>
            <person name="Beausoleil S.A."/>
            <person name="Gerber S.A."/>
            <person name="Gygi S.P."/>
        </authorList>
    </citation>
    <scope>PHOSPHORYLATION [LARGE SCALE ANALYSIS] AT SER-80</scope>
    <scope>IDENTIFICATION BY MASS SPECTROMETRY [LARGE SCALE ANALYSIS]</scope>
    <source>
        <tissue>Liver</tissue>
    </source>
</reference>
<reference key="6">
    <citation type="journal article" date="2009" name="Immunity">
        <title>The phagosomal proteome in interferon-gamma-activated macrophages.</title>
        <authorList>
            <person name="Trost M."/>
            <person name="English L."/>
            <person name="Lemieux S."/>
            <person name="Courcelles M."/>
            <person name="Desjardins M."/>
            <person name="Thibault P."/>
        </authorList>
    </citation>
    <scope>PHOSPHORYLATION [LARGE SCALE ANALYSIS] AT SER-80</scope>
    <scope>IDENTIFICATION BY MASS SPECTROMETRY [LARGE SCALE ANALYSIS]</scope>
</reference>
<reference key="7">
    <citation type="journal article" date="2010" name="Cell">
        <title>A tissue-specific atlas of mouse protein phosphorylation and expression.</title>
        <authorList>
            <person name="Huttlin E.L."/>
            <person name="Jedrychowski M.P."/>
            <person name="Elias J.E."/>
            <person name="Goswami T."/>
            <person name="Rad R."/>
            <person name="Beausoleil S.A."/>
            <person name="Villen J."/>
            <person name="Haas W."/>
            <person name="Sowa M.E."/>
            <person name="Gygi S.P."/>
        </authorList>
    </citation>
    <scope>PHOSPHORYLATION [LARGE SCALE ANALYSIS] AT SER-80; SER-92 AND SER-170</scope>
    <scope>IDENTIFICATION BY MASS SPECTROMETRY [LARGE SCALE ANALYSIS]</scope>
    <source>
        <tissue>Brain</tissue>
        <tissue>Kidney</tissue>
        <tissue>Liver</tissue>
        <tissue>Lung</tissue>
        <tissue>Pancreas</tissue>
        <tissue>Spleen</tissue>
        <tissue>Testis</tissue>
    </source>
</reference>
<reference key="8">
    <citation type="journal article" date="2023" name="Arterioscler. Thromb. Vasc. Biol.">
        <title>DDX24 Is Essential for Cell Cycle Regulation in Vascular Smooth Muscle Cells During Vascular Development via Binding to FANCA mRNA.</title>
        <authorList>
            <person name="Gong Y."/>
            <person name="Liang Y."/>
            <person name="Liu J."/>
            <person name="Wei J."/>
            <person name="Zhang S."/>
            <person name="Chen F."/>
            <person name="Zhang Q."/>
            <person name="Wang L."/>
            <person name="Lan H."/>
            <person name="Wu L."/>
            <person name="Ge W."/>
            <person name="Li S."/>
            <person name="Wang L."/>
            <person name="Shan H."/>
            <person name="He H."/>
        </authorList>
    </citation>
    <scope>FUNCTION</scope>
    <scope>DISRUPTION PHENOTYPE</scope>
</reference>
<comment type="function">
    <text evidence="1">ATP-dependent RNA helicase that plays a role in various aspects of RNA metabolism including pre-mRNA splicing and is thereby involved in different biological processes such as cell cycle regulation or innate immunity (PubMed:37470182). Plays an inhibitory role in TP53 transcriptional activity and subsequently in TP53 controlled cell growth arrest and senescence by inhibiting its EP300 mediated acetylation. Negatively regulates cytosolic RNA-mediated innate immune signaling at least in part by affecting RIPK1/IRF7 interactions. Alternatively, possesses antiviral activity by recognizing gammaherpesvirus transcripts in the context of lytic reactivation (By similarity). Plays an essential role in cell cycle regulation in vascular smooth muscle cells by interacting with and regulating FANCA (Fanconi anemia complementation group A) mRNA (By similarity).</text>
</comment>
<comment type="catalytic activity">
    <reaction>
        <text>ATP + H2O = ADP + phosphate + H(+)</text>
        <dbReference type="Rhea" id="RHEA:13065"/>
        <dbReference type="ChEBI" id="CHEBI:15377"/>
        <dbReference type="ChEBI" id="CHEBI:15378"/>
        <dbReference type="ChEBI" id="CHEBI:30616"/>
        <dbReference type="ChEBI" id="CHEBI:43474"/>
        <dbReference type="ChEBI" id="CHEBI:456216"/>
        <dbReference type="EC" id="3.6.4.13"/>
    </reaction>
</comment>
<comment type="subunit">
    <text evidence="1">Interacts with FADD. Interacts with RIPK1; this interaction disrupts RLR signaling activation of IFN-dependent transcription factor IRF7. Interacts with NIP7. Interacts with EP300; this interaction prevents TP53 acetylation mediated by EP300.</text>
</comment>
<comment type="subcellular location">
    <subcellularLocation>
        <location evidence="1">Cytoplasm</location>
    </subcellularLocation>
    <subcellularLocation>
        <location evidence="1">Nucleus</location>
    </subcellularLocation>
</comment>
<comment type="PTM">
    <text evidence="1">Ubiquitinated by MDM2 without targeting DDX24 for proteasomal degradation. Instead, polyubiquitylated DDX24 promotes interaction with NIP7, a component of pre-rRNP processing complex, and associates with pre-rRNA molecules and pre-ribosomal particles.</text>
</comment>
<comment type="disruption phenotype">
    <text evidence="5">Deletion of Ddx24 induces embryonic lethality. Embryos display vascular deficits.</text>
</comment>
<comment type="similarity">
    <text evidence="6">Belongs to the DEAD box helicase family. DDX24/MAK5 subfamily.</text>
</comment>
<gene>
    <name type="primary">Ddx24</name>
</gene>
<dbReference type="EC" id="3.6.4.13"/>
<dbReference type="EMBL" id="AF214732">
    <property type="protein sequence ID" value="AAG02170.1"/>
    <property type="molecule type" value="mRNA"/>
</dbReference>
<dbReference type="EMBL" id="CH466549">
    <property type="protein sequence ID" value="EDL18835.1"/>
    <property type="molecule type" value="Genomic_DNA"/>
</dbReference>
<dbReference type="EMBL" id="BC055048">
    <property type="protein sequence ID" value="AAH55048.1"/>
    <property type="molecule type" value="mRNA"/>
</dbReference>
<dbReference type="EMBL" id="BC055317">
    <property type="protein sequence ID" value="AAH55317.1"/>
    <property type="molecule type" value="mRNA"/>
</dbReference>
<dbReference type="EMBL" id="U46690">
    <property type="protein sequence ID" value="AAB01091.1"/>
    <property type="molecule type" value="mRNA"/>
</dbReference>
<dbReference type="CCDS" id="CCDS26129.1"/>
<dbReference type="RefSeq" id="NP_001152974.1">
    <property type="nucleotide sequence ID" value="NM_001159502.1"/>
</dbReference>
<dbReference type="RefSeq" id="NP_001351091.1">
    <property type="nucleotide sequence ID" value="NM_001364162.1"/>
</dbReference>
<dbReference type="RefSeq" id="NP_001351092.1">
    <property type="nucleotide sequence ID" value="NM_001364163.1"/>
</dbReference>
<dbReference type="RefSeq" id="NP_065240.2">
    <property type="nucleotide sequence ID" value="NM_020494.3"/>
</dbReference>
<dbReference type="RefSeq" id="XP_006515995.1">
    <property type="nucleotide sequence ID" value="XM_006515932.3"/>
</dbReference>
<dbReference type="RefSeq" id="XP_006515996.1">
    <property type="nucleotide sequence ID" value="XM_006515933.1"/>
</dbReference>
<dbReference type="SMR" id="Q9ESV0"/>
<dbReference type="BioGRID" id="205146">
    <property type="interactions" value="16"/>
</dbReference>
<dbReference type="CORUM" id="Q9ESV0"/>
<dbReference type="FunCoup" id="Q9ESV0">
    <property type="interactions" value="3000"/>
</dbReference>
<dbReference type="STRING" id="10090.ENSMUSP00000105628"/>
<dbReference type="GlyGen" id="Q9ESV0">
    <property type="glycosylation" value="1 site, 1 O-linked glycan (1 site)"/>
</dbReference>
<dbReference type="iPTMnet" id="Q9ESV0"/>
<dbReference type="PhosphoSitePlus" id="Q9ESV0"/>
<dbReference type="SwissPalm" id="Q9ESV0"/>
<dbReference type="jPOST" id="Q9ESV0"/>
<dbReference type="PaxDb" id="10090-ENSMUSP00000105628"/>
<dbReference type="ProteomicsDB" id="279900"/>
<dbReference type="Pumba" id="Q9ESV0"/>
<dbReference type="Antibodypedia" id="108">
    <property type="antibodies" value="192 antibodies from 26 providers"/>
</dbReference>
<dbReference type="DNASU" id="27225"/>
<dbReference type="Ensembl" id="ENSMUST00000044923.15">
    <property type="protein sequence ID" value="ENSMUSP00000040890.8"/>
    <property type="gene ID" value="ENSMUSG00000041645.15"/>
</dbReference>
<dbReference type="GeneID" id="27225"/>
<dbReference type="KEGG" id="mmu:27225"/>
<dbReference type="UCSC" id="uc007ovj.2">
    <property type="organism name" value="mouse"/>
</dbReference>
<dbReference type="AGR" id="MGI:1351337"/>
<dbReference type="CTD" id="57062"/>
<dbReference type="MGI" id="MGI:1351337">
    <property type="gene designation" value="Ddx24"/>
</dbReference>
<dbReference type="VEuPathDB" id="HostDB:ENSMUSG00000041645"/>
<dbReference type="eggNOG" id="KOG0347">
    <property type="taxonomic scope" value="Eukaryota"/>
</dbReference>
<dbReference type="GeneTree" id="ENSGT00550000074847"/>
<dbReference type="HOGENOM" id="CLU_003041_13_1_1"/>
<dbReference type="InParanoid" id="Q9ESV0"/>
<dbReference type="OMA" id="QMIQKAR"/>
<dbReference type="OrthoDB" id="4310724at2759"/>
<dbReference type="BioGRID-ORCS" id="27225">
    <property type="hits" value="22 hits in 78 CRISPR screens"/>
</dbReference>
<dbReference type="ChiTaRS" id="Ddx24">
    <property type="organism name" value="mouse"/>
</dbReference>
<dbReference type="PRO" id="PR:Q9ESV0"/>
<dbReference type="Proteomes" id="UP000000589">
    <property type="component" value="Chromosome 12"/>
</dbReference>
<dbReference type="RNAct" id="Q9ESV0">
    <property type="molecule type" value="protein"/>
</dbReference>
<dbReference type="Bgee" id="ENSMUSG00000041645">
    <property type="expression patterns" value="Expressed in spermatocyte and 130 other cell types or tissues"/>
</dbReference>
<dbReference type="ExpressionAtlas" id="Q9ESV0">
    <property type="expression patterns" value="baseline and differential"/>
</dbReference>
<dbReference type="GO" id="GO:0005737">
    <property type="term" value="C:cytoplasm"/>
    <property type="evidence" value="ECO:0007669"/>
    <property type="project" value="UniProtKB-SubCell"/>
</dbReference>
<dbReference type="GO" id="GO:0005634">
    <property type="term" value="C:nucleus"/>
    <property type="evidence" value="ECO:0007669"/>
    <property type="project" value="UniProtKB-SubCell"/>
</dbReference>
<dbReference type="GO" id="GO:0005524">
    <property type="term" value="F:ATP binding"/>
    <property type="evidence" value="ECO:0007669"/>
    <property type="project" value="UniProtKB-KW"/>
</dbReference>
<dbReference type="GO" id="GO:0016887">
    <property type="term" value="F:ATP hydrolysis activity"/>
    <property type="evidence" value="ECO:0007669"/>
    <property type="project" value="RHEA"/>
</dbReference>
<dbReference type="GO" id="GO:0003723">
    <property type="term" value="F:RNA binding"/>
    <property type="evidence" value="ECO:0007669"/>
    <property type="project" value="UniProtKB-KW"/>
</dbReference>
<dbReference type="GO" id="GO:0003724">
    <property type="term" value="F:RNA helicase activity"/>
    <property type="evidence" value="ECO:0007669"/>
    <property type="project" value="UniProtKB-EC"/>
</dbReference>
<dbReference type="CDD" id="cd17946">
    <property type="entry name" value="DEADc_DDX24"/>
    <property type="match status" value="1"/>
</dbReference>
<dbReference type="CDD" id="cd18787">
    <property type="entry name" value="SF2_C_DEAD"/>
    <property type="match status" value="1"/>
</dbReference>
<dbReference type="FunFam" id="3.40.50.300:FF:001059">
    <property type="entry name" value="ATP-dependent RNA helicase DDX24"/>
    <property type="match status" value="1"/>
</dbReference>
<dbReference type="Gene3D" id="3.40.50.300">
    <property type="entry name" value="P-loop containing nucleotide triphosphate hydrolases"/>
    <property type="match status" value="2"/>
</dbReference>
<dbReference type="InterPro" id="IPR011545">
    <property type="entry name" value="DEAD/DEAH_box_helicase_dom"/>
</dbReference>
<dbReference type="InterPro" id="IPR014001">
    <property type="entry name" value="Helicase_ATP-bd"/>
</dbReference>
<dbReference type="InterPro" id="IPR001650">
    <property type="entry name" value="Helicase_C-like"/>
</dbReference>
<dbReference type="InterPro" id="IPR027417">
    <property type="entry name" value="P-loop_NTPase"/>
</dbReference>
<dbReference type="InterPro" id="IPR000629">
    <property type="entry name" value="RNA-helicase_DEAD-box_CS"/>
</dbReference>
<dbReference type="InterPro" id="IPR014014">
    <property type="entry name" value="RNA_helicase_DEAD_Q_motif"/>
</dbReference>
<dbReference type="PANTHER" id="PTHR24031">
    <property type="entry name" value="RNA HELICASE"/>
    <property type="match status" value="1"/>
</dbReference>
<dbReference type="Pfam" id="PF00270">
    <property type="entry name" value="DEAD"/>
    <property type="match status" value="1"/>
</dbReference>
<dbReference type="Pfam" id="PF00271">
    <property type="entry name" value="Helicase_C"/>
    <property type="match status" value="1"/>
</dbReference>
<dbReference type="SMART" id="SM00487">
    <property type="entry name" value="DEXDc"/>
    <property type="match status" value="1"/>
</dbReference>
<dbReference type="SMART" id="SM00490">
    <property type="entry name" value="HELICc"/>
    <property type="match status" value="1"/>
</dbReference>
<dbReference type="SUPFAM" id="SSF52540">
    <property type="entry name" value="P-loop containing nucleoside triphosphate hydrolases"/>
    <property type="match status" value="2"/>
</dbReference>
<dbReference type="PROSITE" id="PS00039">
    <property type="entry name" value="DEAD_ATP_HELICASE"/>
    <property type="match status" value="1"/>
</dbReference>
<dbReference type="PROSITE" id="PS51192">
    <property type="entry name" value="HELICASE_ATP_BIND_1"/>
    <property type="match status" value="1"/>
</dbReference>
<dbReference type="PROSITE" id="PS51194">
    <property type="entry name" value="HELICASE_CTER"/>
    <property type="match status" value="1"/>
</dbReference>
<dbReference type="PROSITE" id="PS51195">
    <property type="entry name" value="Q_MOTIF"/>
    <property type="match status" value="1"/>
</dbReference>
<organism>
    <name type="scientific">Mus musculus</name>
    <name type="common">Mouse</name>
    <dbReference type="NCBI Taxonomy" id="10090"/>
    <lineage>
        <taxon>Eukaryota</taxon>
        <taxon>Metazoa</taxon>
        <taxon>Chordata</taxon>
        <taxon>Craniata</taxon>
        <taxon>Vertebrata</taxon>
        <taxon>Euteleostomi</taxon>
        <taxon>Mammalia</taxon>
        <taxon>Eutheria</taxon>
        <taxon>Euarchontoglires</taxon>
        <taxon>Glires</taxon>
        <taxon>Rodentia</taxon>
        <taxon>Myomorpha</taxon>
        <taxon>Muroidea</taxon>
        <taxon>Muridae</taxon>
        <taxon>Murinae</taxon>
        <taxon>Mus</taxon>
        <taxon>Mus</taxon>
    </lineage>
</organism>
<accession>Q9ESV0</accession>
<accession>Q61119</accession>
<accession>Q7TM97</accession>
<evidence type="ECO:0000250" key="1">
    <source>
        <dbReference type="UniProtKB" id="Q9GZR7"/>
    </source>
</evidence>
<evidence type="ECO:0000255" key="2">
    <source>
        <dbReference type="PROSITE-ProRule" id="PRU00541"/>
    </source>
</evidence>
<evidence type="ECO:0000255" key="3">
    <source>
        <dbReference type="PROSITE-ProRule" id="PRU00542"/>
    </source>
</evidence>
<evidence type="ECO:0000256" key="4">
    <source>
        <dbReference type="SAM" id="MobiDB-lite"/>
    </source>
</evidence>
<evidence type="ECO:0000269" key="5">
    <source>
    </source>
</evidence>
<evidence type="ECO:0000305" key="6"/>
<evidence type="ECO:0007744" key="7">
    <source>
    </source>
</evidence>
<evidence type="ECO:0007744" key="8">
    <source>
    </source>
</evidence>
<evidence type="ECO:0007744" key="9">
    <source>
    </source>
</evidence>
<proteinExistence type="evidence at protein level"/>
<name>DDX24_MOUSE</name>
<sequence>MKVKETNSKPKLASRGTFQRKGIKIVGKWKQVTIDPNLFADGQMDDLVCFEELTDYRLVKNPSRLFSSEETKKRKAQAVSEEEEEEEGQSSSPKKKIKLKKQRDAARAAEGAAAQNEYEVKASEPEAQGEVTACSDQKVGGAKSESLAQAAPRKKKNKGKKKLDTFQSTSPKLPKKSKKTWMAEVHDQKADVSAWRDLFVPKAVLRALSFLGFSAPTPIQALTLAPAIRDKLDILGAAETGSGKTLAFAIPMIHSVLQWHKMKAPPIPRSTGMPPREMRFGATAHLGSPCKDRTESGVLPEEARIETEAQPSDSGVQATPETSASASAQTLLVCDDDAGEGPSSLEEKPVPKQNEDGEEKFDAEQAGKLKQELCDQIAIYKVHPRRPLLGLVLTPTRELAIQVRQHIDAVAKFTGINTAILVGGMSTQKQQRMLNRHPEIVIATPGRLWELVKEKHPHLSNLRQLRCLVIDEADRMVEKGHFAELSQLLEMLNDSQYNPSRQTLVFSATLTLVHQAPARILHKKHVKKMDKTDKLDLLMQKVGMRGKPKVIDLTRNEGTVETLTETKIHCETDEKDLYLYYFLMQYPGRSLVFANSISCIKRLSGLLKVLDVMPLTLHACMHQKQRLRNLEQFARLQDCVLLATDVAARGLDIPKVQHVIHYQVPRTSEIYIHRSGRTARAASEGLSLMLIGPEDVINFKKIYKTLQKDEDIPLFPVQSKYMDVVKERIRLARQIEKAEYRNFQACLHNSWIEQAAAALEIELEEEMYKGGKADQQEERRRQKQMKMLKQELRHLLSQPLFQENLKTRYPTQSGRPPQPVLASRNIESALSCLSRQKRRRKKPKEPRAPPQPGSSTS</sequence>